<feature type="chain" id="PRO_0000263469" description="Elongation factor G">
    <location>
        <begin position="1"/>
        <end position="697"/>
    </location>
</feature>
<feature type="domain" description="tr-type G">
    <location>
        <begin position="8"/>
        <end position="290"/>
    </location>
</feature>
<feature type="binding site" evidence="1">
    <location>
        <begin position="17"/>
        <end position="24"/>
    </location>
    <ligand>
        <name>GTP</name>
        <dbReference type="ChEBI" id="CHEBI:37565"/>
    </ligand>
</feature>
<feature type="binding site" evidence="1">
    <location>
        <begin position="88"/>
        <end position="92"/>
    </location>
    <ligand>
        <name>GTP</name>
        <dbReference type="ChEBI" id="CHEBI:37565"/>
    </ligand>
</feature>
<feature type="binding site" evidence="1">
    <location>
        <begin position="142"/>
        <end position="145"/>
    </location>
    <ligand>
        <name>GTP</name>
        <dbReference type="ChEBI" id="CHEBI:37565"/>
    </ligand>
</feature>
<accession>Q1H4P0</accession>
<proteinExistence type="inferred from homology"/>
<organism>
    <name type="scientific">Methylobacillus flagellatus (strain ATCC 51484 / DSM 6875 / VKM B-1610 / KT)</name>
    <dbReference type="NCBI Taxonomy" id="265072"/>
    <lineage>
        <taxon>Bacteria</taxon>
        <taxon>Pseudomonadati</taxon>
        <taxon>Pseudomonadota</taxon>
        <taxon>Betaproteobacteria</taxon>
        <taxon>Nitrosomonadales</taxon>
        <taxon>Methylophilaceae</taxon>
        <taxon>Methylobacillus</taxon>
    </lineage>
</organism>
<protein>
    <recommendedName>
        <fullName evidence="1">Elongation factor G</fullName>
        <shortName evidence="1">EF-G</shortName>
    </recommendedName>
</protein>
<comment type="function">
    <text evidence="1">Catalyzes the GTP-dependent ribosomal translocation step during translation elongation. During this step, the ribosome changes from the pre-translocational (PRE) to the post-translocational (POST) state as the newly formed A-site-bound peptidyl-tRNA and P-site-bound deacylated tRNA move to the P and E sites, respectively. Catalyzes the coordinated movement of the two tRNA molecules, the mRNA and conformational changes in the ribosome.</text>
</comment>
<comment type="subcellular location">
    <subcellularLocation>
        <location evidence="1">Cytoplasm</location>
    </subcellularLocation>
</comment>
<comment type="similarity">
    <text evidence="1">Belongs to the TRAFAC class translation factor GTPase superfamily. Classic translation factor GTPase family. EF-G/EF-2 subfamily.</text>
</comment>
<evidence type="ECO:0000255" key="1">
    <source>
        <dbReference type="HAMAP-Rule" id="MF_00054"/>
    </source>
</evidence>
<name>EFG_METFK</name>
<reference key="1">
    <citation type="submission" date="2006-03" db="EMBL/GenBank/DDBJ databases">
        <title>Complete sequence of Methylobacillus flagellatus KT.</title>
        <authorList>
            <consortium name="US DOE Joint Genome Institute"/>
            <person name="Copeland A."/>
            <person name="Lucas S."/>
            <person name="Lapidus A."/>
            <person name="Barry K."/>
            <person name="Detter J.C."/>
            <person name="Glavina del Rio T."/>
            <person name="Hammon N."/>
            <person name="Israni S."/>
            <person name="Dalin E."/>
            <person name="Tice H."/>
            <person name="Pitluck S."/>
            <person name="Brettin T."/>
            <person name="Bruce D."/>
            <person name="Han C."/>
            <person name="Tapia R."/>
            <person name="Saunders E."/>
            <person name="Gilna P."/>
            <person name="Schmutz J."/>
            <person name="Larimer F."/>
            <person name="Land M."/>
            <person name="Kyrpides N."/>
            <person name="Anderson I."/>
            <person name="Richardson P."/>
        </authorList>
    </citation>
    <scope>NUCLEOTIDE SEQUENCE [LARGE SCALE GENOMIC DNA]</scope>
    <source>
        <strain>ATCC 51484 / DSM 6875 / VKM B-1610 / KT</strain>
    </source>
</reference>
<dbReference type="EMBL" id="CP000284">
    <property type="protein sequence ID" value="ABE48547.1"/>
    <property type="molecule type" value="Genomic_DNA"/>
</dbReference>
<dbReference type="RefSeq" id="WP_011478644.1">
    <property type="nucleotide sequence ID" value="NC_007947.1"/>
</dbReference>
<dbReference type="SMR" id="Q1H4P0"/>
<dbReference type="STRING" id="265072.Mfla_0276"/>
<dbReference type="KEGG" id="mfa:Mfla_0276"/>
<dbReference type="eggNOG" id="COG0480">
    <property type="taxonomic scope" value="Bacteria"/>
</dbReference>
<dbReference type="HOGENOM" id="CLU_002794_4_1_4"/>
<dbReference type="OrthoDB" id="9804431at2"/>
<dbReference type="Proteomes" id="UP000002440">
    <property type="component" value="Chromosome"/>
</dbReference>
<dbReference type="GO" id="GO:0005737">
    <property type="term" value="C:cytoplasm"/>
    <property type="evidence" value="ECO:0007669"/>
    <property type="project" value="UniProtKB-SubCell"/>
</dbReference>
<dbReference type="GO" id="GO:0005525">
    <property type="term" value="F:GTP binding"/>
    <property type="evidence" value="ECO:0007669"/>
    <property type="project" value="UniProtKB-UniRule"/>
</dbReference>
<dbReference type="GO" id="GO:0003924">
    <property type="term" value="F:GTPase activity"/>
    <property type="evidence" value="ECO:0007669"/>
    <property type="project" value="InterPro"/>
</dbReference>
<dbReference type="GO" id="GO:0097216">
    <property type="term" value="F:guanosine tetraphosphate binding"/>
    <property type="evidence" value="ECO:0007669"/>
    <property type="project" value="UniProtKB-ARBA"/>
</dbReference>
<dbReference type="GO" id="GO:0003746">
    <property type="term" value="F:translation elongation factor activity"/>
    <property type="evidence" value="ECO:0007669"/>
    <property type="project" value="UniProtKB-UniRule"/>
</dbReference>
<dbReference type="GO" id="GO:0032790">
    <property type="term" value="P:ribosome disassembly"/>
    <property type="evidence" value="ECO:0007669"/>
    <property type="project" value="TreeGrafter"/>
</dbReference>
<dbReference type="CDD" id="cd01886">
    <property type="entry name" value="EF-G"/>
    <property type="match status" value="1"/>
</dbReference>
<dbReference type="CDD" id="cd16262">
    <property type="entry name" value="EFG_III"/>
    <property type="match status" value="1"/>
</dbReference>
<dbReference type="CDD" id="cd01434">
    <property type="entry name" value="EFG_mtEFG1_IV"/>
    <property type="match status" value="1"/>
</dbReference>
<dbReference type="CDD" id="cd03713">
    <property type="entry name" value="EFG_mtEFG_C"/>
    <property type="match status" value="1"/>
</dbReference>
<dbReference type="CDD" id="cd04088">
    <property type="entry name" value="EFG_mtEFG_II"/>
    <property type="match status" value="1"/>
</dbReference>
<dbReference type="FunFam" id="2.40.30.10:FF:000006">
    <property type="entry name" value="Elongation factor G"/>
    <property type="match status" value="1"/>
</dbReference>
<dbReference type="FunFam" id="3.30.230.10:FF:000003">
    <property type="entry name" value="Elongation factor G"/>
    <property type="match status" value="1"/>
</dbReference>
<dbReference type="FunFam" id="3.30.70.240:FF:000001">
    <property type="entry name" value="Elongation factor G"/>
    <property type="match status" value="1"/>
</dbReference>
<dbReference type="FunFam" id="3.30.70.870:FF:000001">
    <property type="entry name" value="Elongation factor G"/>
    <property type="match status" value="1"/>
</dbReference>
<dbReference type="FunFam" id="3.40.50.300:FF:000029">
    <property type="entry name" value="Elongation factor G"/>
    <property type="match status" value="1"/>
</dbReference>
<dbReference type="Gene3D" id="3.30.230.10">
    <property type="match status" value="1"/>
</dbReference>
<dbReference type="Gene3D" id="3.30.70.240">
    <property type="match status" value="1"/>
</dbReference>
<dbReference type="Gene3D" id="3.30.70.870">
    <property type="entry name" value="Elongation Factor G (Translational Gtpase), domain 3"/>
    <property type="match status" value="1"/>
</dbReference>
<dbReference type="Gene3D" id="3.40.50.300">
    <property type="entry name" value="P-loop containing nucleotide triphosphate hydrolases"/>
    <property type="match status" value="1"/>
</dbReference>
<dbReference type="Gene3D" id="2.40.30.10">
    <property type="entry name" value="Translation factors"/>
    <property type="match status" value="1"/>
</dbReference>
<dbReference type="HAMAP" id="MF_00054_B">
    <property type="entry name" value="EF_G_EF_2_B"/>
    <property type="match status" value="1"/>
</dbReference>
<dbReference type="InterPro" id="IPR041095">
    <property type="entry name" value="EFG_II"/>
</dbReference>
<dbReference type="InterPro" id="IPR009022">
    <property type="entry name" value="EFG_III"/>
</dbReference>
<dbReference type="InterPro" id="IPR035647">
    <property type="entry name" value="EFG_III/V"/>
</dbReference>
<dbReference type="InterPro" id="IPR047872">
    <property type="entry name" value="EFG_IV"/>
</dbReference>
<dbReference type="InterPro" id="IPR035649">
    <property type="entry name" value="EFG_V"/>
</dbReference>
<dbReference type="InterPro" id="IPR000640">
    <property type="entry name" value="EFG_V-like"/>
</dbReference>
<dbReference type="InterPro" id="IPR004161">
    <property type="entry name" value="EFTu-like_2"/>
</dbReference>
<dbReference type="InterPro" id="IPR031157">
    <property type="entry name" value="G_TR_CS"/>
</dbReference>
<dbReference type="InterPro" id="IPR027417">
    <property type="entry name" value="P-loop_NTPase"/>
</dbReference>
<dbReference type="InterPro" id="IPR020568">
    <property type="entry name" value="Ribosomal_Su5_D2-typ_SF"/>
</dbReference>
<dbReference type="InterPro" id="IPR014721">
    <property type="entry name" value="Ribsml_uS5_D2-typ_fold_subgr"/>
</dbReference>
<dbReference type="InterPro" id="IPR005225">
    <property type="entry name" value="Small_GTP-bd"/>
</dbReference>
<dbReference type="InterPro" id="IPR000795">
    <property type="entry name" value="T_Tr_GTP-bd_dom"/>
</dbReference>
<dbReference type="InterPro" id="IPR009000">
    <property type="entry name" value="Transl_B-barrel_sf"/>
</dbReference>
<dbReference type="InterPro" id="IPR004540">
    <property type="entry name" value="Transl_elong_EFG/EF2"/>
</dbReference>
<dbReference type="InterPro" id="IPR005517">
    <property type="entry name" value="Transl_elong_EFG/EF2_IV"/>
</dbReference>
<dbReference type="NCBIfam" id="TIGR00484">
    <property type="entry name" value="EF-G"/>
    <property type="match status" value="1"/>
</dbReference>
<dbReference type="NCBIfam" id="NF009379">
    <property type="entry name" value="PRK12740.1-3"/>
    <property type="match status" value="1"/>
</dbReference>
<dbReference type="NCBIfam" id="NF009381">
    <property type="entry name" value="PRK12740.1-5"/>
    <property type="match status" value="1"/>
</dbReference>
<dbReference type="NCBIfam" id="TIGR00231">
    <property type="entry name" value="small_GTP"/>
    <property type="match status" value="1"/>
</dbReference>
<dbReference type="PANTHER" id="PTHR43261:SF1">
    <property type="entry name" value="RIBOSOME-RELEASING FACTOR 2, MITOCHONDRIAL"/>
    <property type="match status" value="1"/>
</dbReference>
<dbReference type="PANTHER" id="PTHR43261">
    <property type="entry name" value="TRANSLATION ELONGATION FACTOR G-RELATED"/>
    <property type="match status" value="1"/>
</dbReference>
<dbReference type="Pfam" id="PF00679">
    <property type="entry name" value="EFG_C"/>
    <property type="match status" value="1"/>
</dbReference>
<dbReference type="Pfam" id="PF14492">
    <property type="entry name" value="EFG_III"/>
    <property type="match status" value="1"/>
</dbReference>
<dbReference type="Pfam" id="PF03764">
    <property type="entry name" value="EFG_IV"/>
    <property type="match status" value="1"/>
</dbReference>
<dbReference type="Pfam" id="PF00009">
    <property type="entry name" value="GTP_EFTU"/>
    <property type="match status" value="1"/>
</dbReference>
<dbReference type="Pfam" id="PF03144">
    <property type="entry name" value="GTP_EFTU_D2"/>
    <property type="match status" value="1"/>
</dbReference>
<dbReference type="PRINTS" id="PR00315">
    <property type="entry name" value="ELONGATNFCT"/>
</dbReference>
<dbReference type="SMART" id="SM00838">
    <property type="entry name" value="EFG_C"/>
    <property type="match status" value="1"/>
</dbReference>
<dbReference type="SMART" id="SM00889">
    <property type="entry name" value="EFG_IV"/>
    <property type="match status" value="1"/>
</dbReference>
<dbReference type="SUPFAM" id="SSF54980">
    <property type="entry name" value="EF-G C-terminal domain-like"/>
    <property type="match status" value="2"/>
</dbReference>
<dbReference type="SUPFAM" id="SSF52540">
    <property type="entry name" value="P-loop containing nucleoside triphosphate hydrolases"/>
    <property type="match status" value="1"/>
</dbReference>
<dbReference type="SUPFAM" id="SSF54211">
    <property type="entry name" value="Ribosomal protein S5 domain 2-like"/>
    <property type="match status" value="1"/>
</dbReference>
<dbReference type="SUPFAM" id="SSF50447">
    <property type="entry name" value="Translation proteins"/>
    <property type="match status" value="1"/>
</dbReference>
<dbReference type="PROSITE" id="PS00301">
    <property type="entry name" value="G_TR_1"/>
    <property type="match status" value="1"/>
</dbReference>
<dbReference type="PROSITE" id="PS51722">
    <property type="entry name" value="G_TR_2"/>
    <property type="match status" value="1"/>
</dbReference>
<sequence length="697" mass="77264">MARKTPIERYRNIGISAHIDAGKTTTSERILFYTGVTHKLGEVHDGAATTDWMEQEQERGITITSSAVTCFWKGMDLSRPEHRINIIDTPGHVDFTIEVERSMRVLDGACMVYCAVGGVQPQSETVWRQANKHKVPRLAFVNKMDRTGANFFKVVEQMKLRLQANPVPVVIPIGAEDNFAGVVDLIKMKAIYWDDASQGMKFEYKDIPADLLDTANEWREKMVESAAEASEELMNKYLESGELSEAEIIAGLRQRTIATEIQPMLCGSAFKNKGVQRMLDAVLDFLPSPVDIPDVVGESESGEPLTRKADDNEHFSALAFKLMSDPFVGQLTFVRVYSGVLTKGETVYNSTSGRKERIGRIVQMSANERNEIEEIRAGDIAACIGLKEVTTGETLCSIDHPIILERMVFPEPVISVAIEPKTKSDQEKMGLALSRLAQEDPSFRVRTDEETNQTIISGMGELHLEIIVDRMKREFNVEANVGAPQVAYREAIKKPVEVEGKFVKQSGGKGQYGHVWIKMEPNEPGKGYEFIDQIKGGTVPREFIPAVDKGLRETIPSGVLAGFPVVDVKVTLFDGSYHDVDSNENAFKMAASMAFKDGMRKADPVLLEPIMAVEVETPEDYMGDVMGDLSSRRGVIQGMDDLVGGGKAIRAEVPLSEMFGYATTVRSLTQGRATYSMEFKHYAEAPRNVAEAIINKK</sequence>
<keyword id="KW-0963">Cytoplasm</keyword>
<keyword id="KW-0251">Elongation factor</keyword>
<keyword id="KW-0342">GTP-binding</keyword>
<keyword id="KW-0547">Nucleotide-binding</keyword>
<keyword id="KW-0648">Protein biosynthesis</keyword>
<keyword id="KW-1185">Reference proteome</keyword>
<gene>
    <name evidence="1" type="primary">fusA</name>
    <name type="ordered locus">Mfla_0276</name>
</gene>